<accession>Q5U4E0</accession>
<accession>Q5DTS1</accession>
<accession>Q8BQU2</accession>
<keyword id="KW-1003">Cell membrane</keyword>
<keyword id="KW-0966">Cell projection</keyword>
<keyword id="KW-0472">Membrane</keyword>
<keyword id="KW-0524">Neurogenesis</keyword>
<keyword id="KW-0628">Postsynaptic cell membrane</keyword>
<keyword id="KW-1185">Reference proteome</keyword>
<keyword id="KW-0770">Synapse</keyword>
<keyword id="KW-0812">Transmembrane</keyword>
<keyword id="KW-1133">Transmembrane helix</keyword>
<name>LHPL4_MOUSE</name>
<sequence>MLPSQEASKLYHEHYMRNSRAIGVLWAIFTICFAIINVVVFIQPYWVGDSVSTPKPGYFGLFHYCVGSGLAGRELTCRGSFTDFSTIPSSAFKAAAFFVLLSMVLILGCITCFALFFFCNTATVYKICAWMQLLAALCLVLGCMIFPDGWDAETIRDMCGAKTGKYSLGDCSVRWAYILAIIGILNALILSFLAFVLGNRQTDLLQEELKQENKDFVGTTVSSVLRPGGDVSGWGVLPCPVAHTQGP</sequence>
<evidence type="ECO:0000250" key="1">
    <source>
        <dbReference type="UniProtKB" id="Q7TSY2"/>
    </source>
</evidence>
<evidence type="ECO:0000250" key="2">
    <source>
        <dbReference type="UniProtKB" id="Q7Z7J7"/>
    </source>
</evidence>
<evidence type="ECO:0000255" key="3"/>
<evidence type="ECO:0000269" key="4">
    <source>
    </source>
</evidence>
<evidence type="ECO:0000269" key="5">
    <source>
    </source>
</evidence>
<evidence type="ECO:0000269" key="6">
    <source>
    </source>
</evidence>
<evidence type="ECO:0000269" key="7">
    <source>
    </source>
</evidence>
<evidence type="ECO:0000303" key="8">
    <source>
    </source>
</evidence>
<evidence type="ECO:0000305" key="9"/>
<evidence type="ECO:0000312" key="10">
    <source>
        <dbReference type="MGI" id="MGI:3057108"/>
    </source>
</evidence>
<feature type="chain" id="PRO_0000285962" description="LHFPL tetraspan subfamily member 4 protein">
    <location>
        <begin position="1"/>
        <end position="247"/>
    </location>
</feature>
<feature type="transmembrane region" description="Helical" evidence="3">
    <location>
        <begin position="22"/>
        <end position="42"/>
    </location>
</feature>
<feature type="transmembrane region" description="Helical" evidence="3">
    <location>
        <begin position="97"/>
        <end position="117"/>
    </location>
</feature>
<feature type="transmembrane region" description="Helical" evidence="3">
    <location>
        <begin position="127"/>
        <end position="147"/>
    </location>
</feature>
<feature type="transmembrane region" description="Helical" evidence="3">
    <location>
        <begin position="178"/>
        <end position="198"/>
    </location>
</feature>
<feature type="sequence conflict" description="In Ref. 1; BAC32729." evidence="9" ref="1">
    <original>I</original>
    <variation>V</variation>
    <location>
        <position position="155"/>
    </location>
</feature>
<proteinExistence type="evidence at protein level"/>
<dbReference type="EMBL" id="AK046437">
    <property type="protein sequence ID" value="BAC32729.1"/>
    <property type="molecule type" value="mRNA"/>
</dbReference>
<dbReference type="EMBL" id="AK220449">
    <property type="protein sequence ID" value="BAD90276.1"/>
    <property type="status" value="ALT_INIT"/>
    <property type="molecule type" value="mRNA"/>
</dbReference>
<dbReference type="EMBL" id="BC085130">
    <property type="protein sequence ID" value="AAH85130.1"/>
    <property type="molecule type" value="mRNA"/>
</dbReference>
<dbReference type="CCDS" id="CCDS39591.1"/>
<dbReference type="RefSeq" id="NP_808431.2">
    <property type="nucleotide sequence ID" value="NM_177763.3"/>
</dbReference>
<dbReference type="RefSeq" id="XP_017177089.1">
    <property type="nucleotide sequence ID" value="XM_017321600.1"/>
</dbReference>
<dbReference type="SMR" id="Q5U4E0"/>
<dbReference type="FunCoup" id="Q5U4E0">
    <property type="interactions" value="246"/>
</dbReference>
<dbReference type="STRING" id="10090.ENSMUSP00000124470"/>
<dbReference type="iPTMnet" id="Q5U4E0"/>
<dbReference type="PhosphoSitePlus" id="Q5U4E0"/>
<dbReference type="SwissPalm" id="Q5U4E0"/>
<dbReference type="PaxDb" id="10090-ENSMUSP00000124470"/>
<dbReference type="ProteomicsDB" id="290026"/>
<dbReference type="Antibodypedia" id="51961">
    <property type="antibodies" value="19 antibodies from 8 providers"/>
</dbReference>
<dbReference type="DNASU" id="269788"/>
<dbReference type="Ensembl" id="ENSMUST00000162280.2">
    <property type="protein sequence ID" value="ENSMUSP00000124470.2"/>
    <property type="gene ID" value="ENSMUSG00000042873.12"/>
</dbReference>
<dbReference type="GeneID" id="269788"/>
<dbReference type="KEGG" id="mmu:269788"/>
<dbReference type="UCSC" id="uc009dev.1">
    <property type="organism name" value="mouse"/>
</dbReference>
<dbReference type="AGR" id="MGI:3057108"/>
<dbReference type="CTD" id="375323"/>
<dbReference type="MGI" id="MGI:3057108">
    <property type="gene designation" value="Lhfpl4"/>
</dbReference>
<dbReference type="VEuPathDB" id="HostDB:ENSMUSG00000042873"/>
<dbReference type="eggNOG" id="KOG4026">
    <property type="taxonomic scope" value="Eukaryota"/>
</dbReference>
<dbReference type="GeneTree" id="ENSGT00990000203541"/>
<dbReference type="HOGENOM" id="CLU_084868_1_2_1"/>
<dbReference type="InParanoid" id="Q5U4E0"/>
<dbReference type="OMA" id="RDMCGEH"/>
<dbReference type="OrthoDB" id="5873721at2759"/>
<dbReference type="PhylomeDB" id="Q5U4E0"/>
<dbReference type="TreeFam" id="TF321143"/>
<dbReference type="BioGRID-ORCS" id="269788">
    <property type="hits" value="4 hits in 77 CRISPR screens"/>
</dbReference>
<dbReference type="ChiTaRS" id="Lhfpl4">
    <property type="organism name" value="mouse"/>
</dbReference>
<dbReference type="PRO" id="PR:Q5U4E0"/>
<dbReference type="Proteomes" id="UP000000589">
    <property type="component" value="Chromosome 6"/>
</dbReference>
<dbReference type="RNAct" id="Q5U4E0">
    <property type="molecule type" value="protein"/>
</dbReference>
<dbReference type="Bgee" id="ENSMUSG00000042873">
    <property type="expression patterns" value="Expressed in habenula and 104 other cell types or tissues"/>
</dbReference>
<dbReference type="ExpressionAtlas" id="Q5U4E0">
    <property type="expression patterns" value="baseline and differential"/>
</dbReference>
<dbReference type="GO" id="GO:0030425">
    <property type="term" value="C:dendrite"/>
    <property type="evidence" value="ECO:0007669"/>
    <property type="project" value="UniProtKB-SubCell"/>
</dbReference>
<dbReference type="GO" id="GO:0098982">
    <property type="term" value="C:GABA-ergic synapse"/>
    <property type="evidence" value="ECO:0000314"/>
    <property type="project" value="SynGO"/>
</dbReference>
<dbReference type="GO" id="GO:0060077">
    <property type="term" value="C:inhibitory synapse"/>
    <property type="evidence" value="ECO:0000314"/>
    <property type="project" value="UniProtKB"/>
</dbReference>
<dbReference type="GO" id="GO:0045211">
    <property type="term" value="C:postsynaptic membrane"/>
    <property type="evidence" value="ECO:0000314"/>
    <property type="project" value="UniProtKB"/>
</dbReference>
<dbReference type="GO" id="GO:0099572">
    <property type="term" value="C:postsynaptic specialization"/>
    <property type="evidence" value="ECO:0000314"/>
    <property type="project" value="SynGO"/>
</dbReference>
<dbReference type="GO" id="GO:0050811">
    <property type="term" value="F:GABA receptor binding"/>
    <property type="evidence" value="ECO:0000314"/>
    <property type="project" value="UniProtKB"/>
</dbReference>
<dbReference type="GO" id="GO:0097112">
    <property type="term" value="P:gamma-aminobutyric acid receptor clustering"/>
    <property type="evidence" value="ECO:0000315"/>
    <property type="project" value="UniProtKB"/>
</dbReference>
<dbReference type="GO" id="GO:0007399">
    <property type="term" value="P:nervous system development"/>
    <property type="evidence" value="ECO:0007669"/>
    <property type="project" value="UniProtKB-KW"/>
</dbReference>
<dbReference type="GO" id="GO:0099645">
    <property type="term" value="P:neurotransmitter receptor localization to postsynaptic specialization membrane"/>
    <property type="evidence" value="ECO:0000314"/>
    <property type="project" value="SynGO"/>
</dbReference>
<dbReference type="GO" id="GO:1905702">
    <property type="term" value="P:regulation of inhibitory synapse assembly"/>
    <property type="evidence" value="ECO:0000315"/>
    <property type="project" value="UniProtKB"/>
</dbReference>
<dbReference type="FunFam" id="1.20.140.150:FF:000035">
    <property type="entry name" value="LHFPL tetraspan subfamily member 4 protein"/>
    <property type="match status" value="1"/>
</dbReference>
<dbReference type="InterPro" id="IPR019372">
    <property type="entry name" value="LHFPL"/>
</dbReference>
<dbReference type="PANTHER" id="PTHR12489:SF14">
    <property type="entry name" value="LHFPL TETRASPAN SUBFAMILY MEMBER 4 PROTEIN"/>
    <property type="match status" value="1"/>
</dbReference>
<dbReference type="PANTHER" id="PTHR12489">
    <property type="entry name" value="LIPOMA HMGIC FUSION PARTNER-LIKE PROTEIN"/>
    <property type="match status" value="1"/>
</dbReference>
<dbReference type="Pfam" id="PF10242">
    <property type="entry name" value="L_HMGIC_fpl"/>
    <property type="match status" value="1"/>
</dbReference>
<comment type="function">
    <text evidence="5 6 7">Plays a role in the regulation of inhibitory synapse formation and function by being involved in maintening gamma-aminobutyric acid receptors (GABAARs) clustering and their associated scaffold proteins at inhibitory synaptic sites (PubMed:28279354, PubMed:28978485, PubMed:29742426). Acts in concert with NLGN2 to recruit or stabilize GABAARs (PubMed:29742426).</text>
</comment>
<comment type="subunit">
    <text evidence="1 5 6 7">Interacts with GABA(A) receptor subunits (PubMed:28279354, PubMed:28978485, PubMed:29742426). Interacts with GABRB3 (PubMed:28978485). Interacts with GABRA2 (PubMed:28978485). Interacts with GABRG2 (PubMed:28978485, PubMed:29742426). Interacts with GABRA1 (PubMed:29742426). Identified in a complex of 720 kDa composed of LHFPL4, NLGN2, GABRA1, GABRB2, GABRG2 and GABRB3 (By similarity). Interacts with NLGN2; leading to mutual regulation of protein level and synaptic clustering (PubMed:28978485, PubMed:29742426).</text>
</comment>
<comment type="subcellular location">
    <subcellularLocation>
        <location evidence="1">Cell projection</location>
        <location evidence="1">Dendrite</location>
    </subcellularLocation>
    <subcellularLocation>
        <location evidence="6 7">Postsynaptic cell membrane</location>
        <topology evidence="3">Multi-pass membrane protein</topology>
    </subcellularLocation>
    <text evidence="1 6 7">Specifically localizes to inhibitory postsynaptic sites (PubMed:28978485, PubMed:29742426). Colocalizes with GPHN, GABRG2 and NLGN2 at inhibitory postsynaptic sites (By similarity) (PubMed:29742426).</text>
</comment>
<comment type="tissue specificity">
    <text evidence="4 5 7">Highly expressed in the brain, including the cortex, hippocampus, midbrain, olfactory bulb pona plus medulla (at protein level) (PubMed:26964900, PubMed:28279354, PubMed:29742426). Expressed in the in the cerebellar granular layer and in granular layer. Colocalized with GPHN at inhibitory synapses (PubMed:29742426). Weakly expressed in heart, testis, lung, intestine, vagina, ovary and uterus (PubMed:26964900).</text>
</comment>
<comment type="disruption phenotype">
    <text evidence="6 7">Contradictory results have been described and may be due to differences in the methods used for gene disruption (PubMed:28978485, PubMed:29742426). No visible phenotype, mice are viable and fertile until adulthood (PubMed:28978485). However cultured hippocampal neurons from deficient mice shown a dramatic decrease in both amplitude and frequency of miniature inhibitory postsynaptic currents (mIPSC) (PubMed:28978485). In contrast, deficient mice exhibit profound impairment of inhibitory synapse formation, prominent motor behavioral deficits and premature death (PubMed:29742426).</text>
</comment>
<comment type="similarity">
    <text evidence="9">Belongs to the LHFP family.</text>
</comment>
<comment type="sequence caution" evidence="9">
    <conflict type="erroneous initiation">
        <sequence resource="EMBL-CDS" id="BAD90276"/>
    </conflict>
</comment>
<protein>
    <recommendedName>
        <fullName evidence="2">LHFPL tetraspan subfamily member 4 protein</fullName>
    </recommendedName>
    <alternativeName>
        <fullName evidence="8">GABAA receptor regulatory Lhfpl4</fullName>
    </alternativeName>
    <alternativeName>
        <fullName evidence="10">Lipoma HMGIC fusion partner-like 4 protein</fullName>
    </alternativeName>
</protein>
<gene>
    <name evidence="10" type="primary">Lhfpl4</name>
    <name evidence="8" type="synonym">Garlh4</name>
    <name type="synonym">Kiaa4027</name>
    <name evidence="8" type="synonym">Lh4</name>
</gene>
<reference key="1">
    <citation type="journal article" date="2005" name="Science">
        <title>The transcriptional landscape of the mammalian genome.</title>
        <authorList>
            <person name="Carninci P."/>
            <person name="Kasukawa T."/>
            <person name="Katayama S."/>
            <person name="Gough J."/>
            <person name="Frith M.C."/>
            <person name="Maeda N."/>
            <person name="Oyama R."/>
            <person name="Ravasi T."/>
            <person name="Lenhard B."/>
            <person name="Wells C."/>
            <person name="Kodzius R."/>
            <person name="Shimokawa K."/>
            <person name="Bajic V.B."/>
            <person name="Brenner S.E."/>
            <person name="Batalov S."/>
            <person name="Forrest A.R."/>
            <person name="Zavolan M."/>
            <person name="Davis M.J."/>
            <person name="Wilming L.G."/>
            <person name="Aidinis V."/>
            <person name="Allen J.E."/>
            <person name="Ambesi-Impiombato A."/>
            <person name="Apweiler R."/>
            <person name="Aturaliya R.N."/>
            <person name="Bailey T.L."/>
            <person name="Bansal M."/>
            <person name="Baxter L."/>
            <person name="Beisel K.W."/>
            <person name="Bersano T."/>
            <person name="Bono H."/>
            <person name="Chalk A.M."/>
            <person name="Chiu K.P."/>
            <person name="Choudhary V."/>
            <person name="Christoffels A."/>
            <person name="Clutterbuck D.R."/>
            <person name="Crowe M.L."/>
            <person name="Dalla E."/>
            <person name="Dalrymple B.P."/>
            <person name="de Bono B."/>
            <person name="Della Gatta G."/>
            <person name="di Bernardo D."/>
            <person name="Down T."/>
            <person name="Engstrom P."/>
            <person name="Fagiolini M."/>
            <person name="Faulkner G."/>
            <person name="Fletcher C.F."/>
            <person name="Fukushima T."/>
            <person name="Furuno M."/>
            <person name="Futaki S."/>
            <person name="Gariboldi M."/>
            <person name="Georgii-Hemming P."/>
            <person name="Gingeras T.R."/>
            <person name="Gojobori T."/>
            <person name="Green R.E."/>
            <person name="Gustincich S."/>
            <person name="Harbers M."/>
            <person name="Hayashi Y."/>
            <person name="Hensch T.K."/>
            <person name="Hirokawa N."/>
            <person name="Hill D."/>
            <person name="Huminiecki L."/>
            <person name="Iacono M."/>
            <person name="Ikeo K."/>
            <person name="Iwama A."/>
            <person name="Ishikawa T."/>
            <person name="Jakt M."/>
            <person name="Kanapin A."/>
            <person name="Katoh M."/>
            <person name="Kawasawa Y."/>
            <person name="Kelso J."/>
            <person name="Kitamura H."/>
            <person name="Kitano H."/>
            <person name="Kollias G."/>
            <person name="Krishnan S.P."/>
            <person name="Kruger A."/>
            <person name="Kummerfeld S.K."/>
            <person name="Kurochkin I.V."/>
            <person name="Lareau L.F."/>
            <person name="Lazarevic D."/>
            <person name="Lipovich L."/>
            <person name="Liu J."/>
            <person name="Liuni S."/>
            <person name="McWilliam S."/>
            <person name="Madan Babu M."/>
            <person name="Madera M."/>
            <person name="Marchionni L."/>
            <person name="Matsuda H."/>
            <person name="Matsuzawa S."/>
            <person name="Miki H."/>
            <person name="Mignone F."/>
            <person name="Miyake S."/>
            <person name="Morris K."/>
            <person name="Mottagui-Tabar S."/>
            <person name="Mulder N."/>
            <person name="Nakano N."/>
            <person name="Nakauchi H."/>
            <person name="Ng P."/>
            <person name="Nilsson R."/>
            <person name="Nishiguchi S."/>
            <person name="Nishikawa S."/>
            <person name="Nori F."/>
            <person name="Ohara O."/>
            <person name="Okazaki Y."/>
            <person name="Orlando V."/>
            <person name="Pang K.C."/>
            <person name="Pavan W.J."/>
            <person name="Pavesi G."/>
            <person name="Pesole G."/>
            <person name="Petrovsky N."/>
            <person name="Piazza S."/>
            <person name="Reed J."/>
            <person name="Reid J.F."/>
            <person name="Ring B.Z."/>
            <person name="Ringwald M."/>
            <person name="Rost B."/>
            <person name="Ruan Y."/>
            <person name="Salzberg S.L."/>
            <person name="Sandelin A."/>
            <person name="Schneider C."/>
            <person name="Schoenbach C."/>
            <person name="Sekiguchi K."/>
            <person name="Semple C.A."/>
            <person name="Seno S."/>
            <person name="Sessa L."/>
            <person name="Sheng Y."/>
            <person name="Shibata Y."/>
            <person name="Shimada H."/>
            <person name="Shimada K."/>
            <person name="Silva D."/>
            <person name="Sinclair B."/>
            <person name="Sperling S."/>
            <person name="Stupka E."/>
            <person name="Sugiura K."/>
            <person name="Sultana R."/>
            <person name="Takenaka Y."/>
            <person name="Taki K."/>
            <person name="Tammoja K."/>
            <person name="Tan S.L."/>
            <person name="Tang S."/>
            <person name="Taylor M.S."/>
            <person name="Tegner J."/>
            <person name="Teichmann S.A."/>
            <person name="Ueda H.R."/>
            <person name="van Nimwegen E."/>
            <person name="Verardo R."/>
            <person name="Wei C.L."/>
            <person name="Yagi K."/>
            <person name="Yamanishi H."/>
            <person name="Zabarovsky E."/>
            <person name="Zhu S."/>
            <person name="Zimmer A."/>
            <person name="Hide W."/>
            <person name="Bult C."/>
            <person name="Grimmond S.M."/>
            <person name="Teasdale R.D."/>
            <person name="Liu E.T."/>
            <person name="Brusic V."/>
            <person name="Quackenbush J."/>
            <person name="Wahlestedt C."/>
            <person name="Mattick J.S."/>
            <person name="Hume D.A."/>
            <person name="Kai C."/>
            <person name="Sasaki D."/>
            <person name="Tomaru Y."/>
            <person name="Fukuda S."/>
            <person name="Kanamori-Katayama M."/>
            <person name="Suzuki M."/>
            <person name="Aoki J."/>
            <person name="Arakawa T."/>
            <person name="Iida J."/>
            <person name="Imamura K."/>
            <person name="Itoh M."/>
            <person name="Kato T."/>
            <person name="Kawaji H."/>
            <person name="Kawagashira N."/>
            <person name="Kawashima T."/>
            <person name="Kojima M."/>
            <person name="Kondo S."/>
            <person name="Konno H."/>
            <person name="Nakano K."/>
            <person name="Ninomiya N."/>
            <person name="Nishio T."/>
            <person name="Okada M."/>
            <person name="Plessy C."/>
            <person name="Shibata K."/>
            <person name="Shiraki T."/>
            <person name="Suzuki S."/>
            <person name="Tagami M."/>
            <person name="Waki K."/>
            <person name="Watahiki A."/>
            <person name="Okamura-Oho Y."/>
            <person name="Suzuki H."/>
            <person name="Kawai J."/>
            <person name="Hayashizaki Y."/>
        </authorList>
    </citation>
    <scope>NUCLEOTIDE SEQUENCE [LARGE SCALE MRNA]</scope>
    <source>
        <strain>C57BL/6J</strain>
        <tissue>Corpora quadrigemina</tissue>
    </source>
</reference>
<reference key="2">
    <citation type="submission" date="2005-02" db="EMBL/GenBank/DDBJ databases">
        <title>Prediction of the coding sequences of mouse homologues of KIAA gene. The complete nucleotide sequences of mouse KIAA-homologous cDNAs identified by screening of terminal sequences of cDNA clones randomly sampled from size-fractionated libraries.</title>
        <authorList>
            <person name="Okazaki N."/>
            <person name="Kikuno R.F."/>
            <person name="Ohara R."/>
            <person name="Inamoto S."/>
            <person name="Nagase T."/>
            <person name="Ohara O."/>
            <person name="Koga H."/>
        </authorList>
    </citation>
    <scope>NUCLEOTIDE SEQUENCE [LARGE SCALE MRNA]</scope>
    <source>
        <tissue>Fetal brain</tissue>
    </source>
</reference>
<reference key="3">
    <citation type="journal article" date="2004" name="Genome Res.">
        <title>The status, quality, and expansion of the NIH full-length cDNA project: the Mammalian Gene Collection (MGC).</title>
        <authorList>
            <consortium name="The MGC Project Team"/>
        </authorList>
    </citation>
    <scope>NUCLEOTIDE SEQUENCE [LARGE SCALE MRNA]</scope>
    <source>
        <strain>C57BL/6J</strain>
        <tissue>Brain</tissue>
    </source>
</reference>
<reference key="4">
    <citation type="journal article" date="2010" name="Cell">
        <title>A tissue-specific atlas of mouse protein phosphorylation and expression.</title>
        <authorList>
            <person name="Huttlin E.L."/>
            <person name="Jedrychowski M.P."/>
            <person name="Elias J.E."/>
            <person name="Goswami T."/>
            <person name="Rad R."/>
            <person name="Beausoleil S.A."/>
            <person name="Villen J."/>
            <person name="Haas W."/>
            <person name="Sowa M.E."/>
            <person name="Gygi S.P."/>
        </authorList>
    </citation>
    <scope>IDENTIFICATION BY MASS SPECTROMETRY [LARGE SCALE ANALYSIS]</scope>
    <source>
        <tissue>Brain</tissue>
    </source>
</reference>
<reference key="5">
    <citation type="journal article" date="2016" name="Sci. Rep.">
        <title>Novel function of LHFPL2 in female and male distal reproductive tract development.</title>
        <authorList>
            <person name="Zhao F."/>
            <person name="Zhou J."/>
            <person name="Li R."/>
            <person name="Dudley E.A."/>
            <person name="Ye X."/>
        </authorList>
    </citation>
    <scope>TISSUE SPECIFICITY</scope>
</reference>
<reference key="6">
    <citation type="journal article" date="2017" name="Cell Rep.">
        <title>An essential role for the tetraspanin LHFPL4 in the cell-type-specific targeting and clustering of synaptic GABAA ceceptors.</title>
        <authorList>
            <person name="Davenport E.C."/>
            <person name="Pendolino V."/>
            <person name="Kontou G."/>
            <person name="McGee T.P."/>
            <person name="Sheehan D.F."/>
            <person name="Lopez-Domenech G."/>
            <person name="Farrant M."/>
            <person name="Kittler J.T."/>
        </authorList>
    </citation>
    <scope>INTERACTION WITH GABAARS</scope>
    <scope>INTERACTION WITH GABRB3; GABRA2 AND GABRG2</scope>
    <scope>SUBCELLULAR LOCATION</scope>
    <scope>DISRUPTION PHENOTYPE</scope>
    <scope>FUNCTION</scope>
</reference>
<reference key="7">
    <citation type="journal article" date="2017" name="Neuron">
        <title>GARLH family proteins stabilize GABAA receptors at synapses.</title>
        <authorList>
            <person name="Yamasaki T."/>
            <person name="Hoyos-Ramirez E."/>
            <person name="Martenson J.S."/>
            <person name="Morimoto-Tomita M."/>
            <person name="Tomita S."/>
        </authorList>
    </citation>
    <scope>SUBCELLULAR LOCATION</scope>
    <scope>TISSUE SPECIFICITY</scope>
    <scope>INTERACTION WITH NLGN2</scope>
    <scope>FUNCTION</scope>
    <scope>INTERACTION WITH GABAARS</scope>
</reference>
<reference key="8">
    <citation type="journal article" date="2018" name="Cell Rep.">
        <title>Impairment of inhibitory synapse formation and motor behavior in mice lacking the NL2 binding partner LHFPL4/GARLH4.</title>
        <authorList>
            <person name="Wu M."/>
            <person name="Tian H.L."/>
            <person name="Liu X."/>
            <person name="Lai J.H.C."/>
            <person name="Du S."/>
            <person name="Xia J."/>
        </authorList>
    </citation>
    <scope>SUBCELLULAR LOCATION</scope>
    <scope>FUNCTION</scope>
    <scope>DISRUPTION PHENOTYPE</scope>
    <scope>TISSUE SPECIFICITY</scope>
    <scope>IDENTIFICATION BY MASS SPECTROMETRY</scope>
    <scope>INTERACTION WITH GABAARS</scope>
    <scope>INTERACTION WITH GABRG2; GABRA1 AND NLGN2</scope>
</reference>
<organism>
    <name type="scientific">Mus musculus</name>
    <name type="common">Mouse</name>
    <dbReference type="NCBI Taxonomy" id="10090"/>
    <lineage>
        <taxon>Eukaryota</taxon>
        <taxon>Metazoa</taxon>
        <taxon>Chordata</taxon>
        <taxon>Craniata</taxon>
        <taxon>Vertebrata</taxon>
        <taxon>Euteleostomi</taxon>
        <taxon>Mammalia</taxon>
        <taxon>Eutheria</taxon>
        <taxon>Euarchontoglires</taxon>
        <taxon>Glires</taxon>
        <taxon>Rodentia</taxon>
        <taxon>Myomorpha</taxon>
        <taxon>Muroidea</taxon>
        <taxon>Muridae</taxon>
        <taxon>Murinae</taxon>
        <taxon>Mus</taxon>
        <taxon>Mus</taxon>
    </lineage>
</organism>